<feature type="chain" id="PRO_1000073044" description="Acetyl-coenzyme A synthetase">
    <location>
        <begin position="1"/>
        <end position="647"/>
    </location>
</feature>
<feature type="binding site" evidence="1">
    <location>
        <begin position="190"/>
        <end position="193"/>
    </location>
    <ligand>
        <name>CoA</name>
        <dbReference type="ChEBI" id="CHEBI:57287"/>
    </ligand>
</feature>
<feature type="binding site" evidence="1">
    <location>
        <position position="308"/>
    </location>
    <ligand>
        <name>CoA</name>
        <dbReference type="ChEBI" id="CHEBI:57287"/>
    </ligand>
</feature>
<feature type="binding site" evidence="1">
    <location>
        <position position="332"/>
    </location>
    <ligand>
        <name>CoA</name>
        <dbReference type="ChEBI" id="CHEBI:57287"/>
    </ligand>
</feature>
<feature type="binding site" evidence="1">
    <location>
        <begin position="384"/>
        <end position="386"/>
    </location>
    <ligand>
        <name>ATP</name>
        <dbReference type="ChEBI" id="CHEBI:30616"/>
    </ligand>
</feature>
<feature type="binding site" evidence="1">
    <location>
        <begin position="408"/>
        <end position="413"/>
    </location>
    <ligand>
        <name>ATP</name>
        <dbReference type="ChEBI" id="CHEBI:30616"/>
    </ligand>
</feature>
<feature type="binding site" evidence="1">
    <location>
        <position position="497"/>
    </location>
    <ligand>
        <name>ATP</name>
        <dbReference type="ChEBI" id="CHEBI:30616"/>
    </ligand>
</feature>
<feature type="binding site" evidence="1">
    <location>
        <position position="512"/>
    </location>
    <ligand>
        <name>ATP</name>
        <dbReference type="ChEBI" id="CHEBI:30616"/>
    </ligand>
</feature>
<feature type="binding site" evidence="1">
    <location>
        <position position="520"/>
    </location>
    <ligand>
        <name>CoA</name>
        <dbReference type="ChEBI" id="CHEBI:57287"/>
    </ligand>
</feature>
<feature type="binding site" evidence="1">
    <location>
        <position position="523"/>
    </location>
    <ligand>
        <name>ATP</name>
        <dbReference type="ChEBI" id="CHEBI:30616"/>
    </ligand>
</feature>
<feature type="binding site" evidence="1">
    <location>
        <position position="534"/>
    </location>
    <ligand>
        <name>Mg(2+)</name>
        <dbReference type="ChEBI" id="CHEBI:18420"/>
    </ligand>
</feature>
<feature type="binding site" evidence="1">
    <location>
        <position position="536"/>
    </location>
    <ligand>
        <name>Mg(2+)</name>
        <dbReference type="ChEBI" id="CHEBI:18420"/>
    </ligand>
</feature>
<feature type="binding site" evidence="1">
    <location>
        <position position="539"/>
    </location>
    <ligand>
        <name>Mg(2+)</name>
        <dbReference type="ChEBI" id="CHEBI:18420"/>
    </ligand>
</feature>
<feature type="binding site" evidence="1">
    <location>
        <position position="581"/>
    </location>
    <ligand>
        <name>CoA</name>
        <dbReference type="ChEBI" id="CHEBI:57287"/>
    </ligand>
</feature>
<feature type="modified residue" description="N6-acetyllysine" evidence="1">
    <location>
        <position position="606"/>
    </location>
</feature>
<evidence type="ECO:0000255" key="1">
    <source>
        <dbReference type="HAMAP-Rule" id="MF_01123"/>
    </source>
</evidence>
<protein>
    <recommendedName>
        <fullName evidence="1">Acetyl-coenzyme A synthetase</fullName>
        <shortName evidence="1">AcCoA synthetase</shortName>
        <shortName evidence="1">Acs</shortName>
        <ecNumber evidence="1">6.2.1.1</ecNumber>
    </recommendedName>
    <alternativeName>
        <fullName evidence="1">Acetate--CoA ligase</fullName>
    </alternativeName>
    <alternativeName>
        <fullName evidence="1">Acyl-activating enzyme</fullName>
    </alternativeName>
</protein>
<reference key="1">
    <citation type="journal article" date="2011" name="Stand. Genomic Sci.">
        <title>Complete genome sequence of Parvibaculum lavamentivorans type strain (DS-1(T)).</title>
        <authorList>
            <person name="Schleheck D."/>
            <person name="Weiss M."/>
            <person name="Pitluck S."/>
            <person name="Bruce D."/>
            <person name="Land M.L."/>
            <person name="Han S."/>
            <person name="Saunders E."/>
            <person name="Tapia R."/>
            <person name="Detter C."/>
            <person name="Brettin T."/>
            <person name="Han J."/>
            <person name="Woyke T."/>
            <person name="Goodwin L."/>
            <person name="Pennacchio L."/>
            <person name="Nolan M."/>
            <person name="Cook A.M."/>
            <person name="Kjelleberg S."/>
            <person name="Thomas T."/>
        </authorList>
    </citation>
    <scope>NUCLEOTIDE SEQUENCE [LARGE SCALE GENOMIC DNA]</scope>
    <source>
        <strain>DS-1 / DSM 13023 / NCIMB 13966</strain>
    </source>
</reference>
<organism>
    <name type="scientific">Parvibaculum lavamentivorans (strain DS-1 / DSM 13023 / NCIMB 13966)</name>
    <dbReference type="NCBI Taxonomy" id="402881"/>
    <lineage>
        <taxon>Bacteria</taxon>
        <taxon>Pseudomonadati</taxon>
        <taxon>Pseudomonadota</taxon>
        <taxon>Alphaproteobacteria</taxon>
        <taxon>Hyphomicrobiales</taxon>
        <taxon>Parvibaculaceae</taxon>
        <taxon>Parvibaculum</taxon>
    </lineage>
</organism>
<accession>A7HSR8</accession>
<dbReference type="EC" id="6.2.1.1" evidence="1"/>
<dbReference type="EMBL" id="CP000774">
    <property type="protein sequence ID" value="ABS62951.1"/>
    <property type="molecule type" value="Genomic_DNA"/>
</dbReference>
<dbReference type="RefSeq" id="WP_012110225.1">
    <property type="nucleotide sequence ID" value="NC_009719.1"/>
</dbReference>
<dbReference type="SMR" id="A7HSR8"/>
<dbReference type="STRING" id="402881.Plav_1331"/>
<dbReference type="KEGG" id="pla:Plav_1331"/>
<dbReference type="eggNOG" id="COG0365">
    <property type="taxonomic scope" value="Bacteria"/>
</dbReference>
<dbReference type="HOGENOM" id="CLU_000022_3_6_5"/>
<dbReference type="OrthoDB" id="9803968at2"/>
<dbReference type="Proteomes" id="UP000006377">
    <property type="component" value="Chromosome"/>
</dbReference>
<dbReference type="GO" id="GO:0005829">
    <property type="term" value="C:cytosol"/>
    <property type="evidence" value="ECO:0007669"/>
    <property type="project" value="TreeGrafter"/>
</dbReference>
<dbReference type="GO" id="GO:0003987">
    <property type="term" value="F:acetate-CoA ligase activity"/>
    <property type="evidence" value="ECO:0007669"/>
    <property type="project" value="UniProtKB-UniRule"/>
</dbReference>
<dbReference type="GO" id="GO:0016208">
    <property type="term" value="F:AMP binding"/>
    <property type="evidence" value="ECO:0007669"/>
    <property type="project" value="InterPro"/>
</dbReference>
<dbReference type="GO" id="GO:0005524">
    <property type="term" value="F:ATP binding"/>
    <property type="evidence" value="ECO:0007669"/>
    <property type="project" value="UniProtKB-KW"/>
</dbReference>
<dbReference type="GO" id="GO:0046872">
    <property type="term" value="F:metal ion binding"/>
    <property type="evidence" value="ECO:0007669"/>
    <property type="project" value="UniProtKB-KW"/>
</dbReference>
<dbReference type="GO" id="GO:0019427">
    <property type="term" value="P:acetyl-CoA biosynthetic process from acetate"/>
    <property type="evidence" value="ECO:0007669"/>
    <property type="project" value="InterPro"/>
</dbReference>
<dbReference type="CDD" id="cd05966">
    <property type="entry name" value="ACS"/>
    <property type="match status" value="1"/>
</dbReference>
<dbReference type="FunFam" id="3.30.300.30:FF:000004">
    <property type="entry name" value="Acetyl-coenzyme A synthetase"/>
    <property type="match status" value="1"/>
</dbReference>
<dbReference type="FunFam" id="3.40.50.12780:FF:000001">
    <property type="entry name" value="Acetyl-coenzyme A synthetase"/>
    <property type="match status" value="1"/>
</dbReference>
<dbReference type="Gene3D" id="3.30.300.30">
    <property type="match status" value="1"/>
</dbReference>
<dbReference type="Gene3D" id="3.40.50.12780">
    <property type="entry name" value="N-terminal domain of ligase-like"/>
    <property type="match status" value="1"/>
</dbReference>
<dbReference type="HAMAP" id="MF_01123">
    <property type="entry name" value="Ac_CoA_synth"/>
    <property type="match status" value="1"/>
</dbReference>
<dbReference type="InterPro" id="IPR011904">
    <property type="entry name" value="Ac_CoA_lig"/>
</dbReference>
<dbReference type="InterPro" id="IPR032387">
    <property type="entry name" value="ACAS_N"/>
</dbReference>
<dbReference type="InterPro" id="IPR025110">
    <property type="entry name" value="AMP-bd_C"/>
</dbReference>
<dbReference type="InterPro" id="IPR045851">
    <property type="entry name" value="AMP-bd_C_sf"/>
</dbReference>
<dbReference type="InterPro" id="IPR020845">
    <property type="entry name" value="AMP-binding_CS"/>
</dbReference>
<dbReference type="InterPro" id="IPR000873">
    <property type="entry name" value="AMP-dep_synth/lig_dom"/>
</dbReference>
<dbReference type="InterPro" id="IPR042099">
    <property type="entry name" value="ANL_N_sf"/>
</dbReference>
<dbReference type="NCBIfam" id="TIGR02188">
    <property type="entry name" value="Ac_CoA_lig_AcsA"/>
    <property type="match status" value="1"/>
</dbReference>
<dbReference type="NCBIfam" id="NF001208">
    <property type="entry name" value="PRK00174.1"/>
    <property type="match status" value="1"/>
</dbReference>
<dbReference type="PANTHER" id="PTHR24095">
    <property type="entry name" value="ACETYL-COENZYME A SYNTHETASE"/>
    <property type="match status" value="1"/>
</dbReference>
<dbReference type="PANTHER" id="PTHR24095:SF14">
    <property type="entry name" value="ACETYL-COENZYME A SYNTHETASE 1"/>
    <property type="match status" value="1"/>
</dbReference>
<dbReference type="Pfam" id="PF16177">
    <property type="entry name" value="ACAS_N"/>
    <property type="match status" value="1"/>
</dbReference>
<dbReference type="Pfam" id="PF00501">
    <property type="entry name" value="AMP-binding"/>
    <property type="match status" value="1"/>
</dbReference>
<dbReference type="Pfam" id="PF13193">
    <property type="entry name" value="AMP-binding_C"/>
    <property type="match status" value="1"/>
</dbReference>
<dbReference type="SUPFAM" id="SSF56801">
    <property type="entry name" value="Acetyl-CoA synthetase-like"/>
    <property type="match status" value="1"/>
</dbReference>
<dbReference type="PROSITE" id="PS00455">
    <property type="entry name" value="AMP_BINDING"/>
    <property type="match status" value="1"/>
</dbReference>
<proteinExistence type="inferred from homology"/>
<gene>
    <name evidence="1" type="primary">acsA</name>
    <name type="ordered locus">Plav_1331</name>
</gene>
<name>ACSA_PARL1</name>
<keyword id="KW-0007">Acetylation</keyword>
<keyword id="KW-0067">ATP-binding</keyword>
<keyword id="KW-0436">Ligase</keyword>
<keyword id="KW-0460">Magnesium</keyword>
<keyword id="KW-0479">Metal-binding</keyword>
<keyword id="KW-0547">Nucleotide-binding</keyword>
<keyword id="KW-1185">Reference proteome</keyword>
<comment type="function">
    <text evidence="1">Catalyzes the conversion of acetate into acetyl-CoA (AcCoA), an essential intermediate at the junction of anabolic and catabolic pathways. AcsA undergoes a two-step reaction. In the first half reaction, AcsA combines acetate with ATP to form acetyl-adenylate (AcAMP) intermediate. In the second half reaction, it can then transfer the acetyl group from AcAMP to the sulfhydryl group of CoA, forming the product AcCoA.</text>
</comment>
<comment type="catalytic activity">
    <reaction evidence="1">
        <text>acetate + ATP + CoA = acetyl-CoA + AMP + diphosphate</text>
        <dbReference type="Rhea" id="RHEA:23176"/>
        <dbReference type="ChEBI" id="CHEBI:30089"/>
        <dbReference type="ChEBI" id="CHEBI:30616"/>
        <dbReference type="ChEBI" id="CHEBI:33019"/>
        <dbReference type="ChEBI" id="CHEBI:57287"/>
        <dbReference type="ChEBI" id="CHEBI:57288"/>
        <dbReference type="ChEBI" id="CHEBI:456215"/>
        <dbReference type="EC" id="6.2.1.1"/>
    </reaction>
</comment>
<comment type="cofactor">
    <cofactor evidence="1">
        <name>Mg(2+)</name>
        <dbReference type="ChEBI" id="CHEBI:18420"/>
    </cofactor>
</comment>
<comment type="PTM">
    <text evidence="1">Acetylated. Deacetylation by the SIR2-homolog deacetylase activates the enzyme.</text>
</comment>
<comment type="similarity">
    <text evidence="1">Belongs to the ATP-dependent AMP-binding enzyme family.</text>
</comment>
<sequence length="647" mass="71661">MSDEIFPVPAEWKKRAIVDAEKYRHMYEASINDPESFWRREGLRIDWMKPYTKIKDTSFDPHNVSIKWFEDGTLNASVNCIDRHLERRAGQVAIIWEGDDPSIDRKITYRELHDEVCRFANVLKARGVKKGDRVTIYMPMIPEAAYAMLACARIGAVHSVVFGGFSPDSLAGRIVDCASSCVITADEGVRGGRKIPLKANTDEALKKCPGVKSVIVVKHTGGAVAMEKGRDVWYAEEAAKVSATCAPEEMNAEDPLFILYTSGSTGKPKGVLHTTGGYMVYASMTHQYVFDYHDGDIYWCTADVGWVTGHSYILYGPLANGATTLMFEGVPNYPDASRCWQVIDKHEVNIFYTAPTALRALMREGEEPVKKTSRKSLRLLGSVGEPINPEAWLWYHRVVGDGRCPIVDTWWQTETGGILISPLPGAIATKPGSATKPFFGVQPVIVDAEGNVQEGATTGNLCIDDSWPGQMRTVYGDHQRFVETYFIQYPGRYFTGDGCRRDEDGYYWITGRVDDVLNVSGHRMGTAEVESALVAHPKVAEAAVVGYPHDIKGQGIYAYVTLIAGEAATEELRKELVTWVRKEIGPIASPDLIQFAPGLPKTRSGKIMRRILRKIAEDDFSNLGDTSTLADPSVVTDLVDNRQNKAG</sequence>